<sequence length="62" mass="6541">MTLAFQLAVFALIATSSILLISVPVVFASPDGWSSNKNVIFSGTSLWIGLVFLVGILNSLIS</sequence>
<gene>
    <name evidence="1" type="primary">psbZ</name>
</gene>
<proteinExistence type="inferred from homology"/>
<evidence type="ECO:0000255" key="1">
    <source>
        <dbReference type="HAMAP-Rule" id="MF_00644"/>
    </source>
</evidence>
<dbReference type="EMBL" id="EF044213">
    <property type="protein sequence ID" value="ABJ89676.1"/>
    <property type="molecule type" value="Genomic_DNA"/>
</dbReference>
<dbReference type="RefSeq" id="YP_817479.1">
    <property type="nucleotide sequence ID" value="NC_008535.1"/>
</dbReference>
<dbReference type="SMR" id="A0A332"/>
<dbReference type="GeneID" id="4421871"/>
<dbReference type="OrthoDB" id="1161947at2759"/>
<dbReference type="Proteomes" id="UP000515148">
    <property type="component" value="Chloroplast Pltd"/>
</dbReference>
<dbReference type="GO" id="GO:0009535">
    <property type="term" value="C:chloroplast thylakoid membrane"/>
    <property type="evidence" value="ECO:0007669"/>
    <property type="project" value="UniProtKB-SubCell"/>
</dbReference>
<dbReference type="GO" id="GO:0009539">
    <property type="term" value="C:photosystem II reaction center"/>
    <property type="evidence" value="ECO:0007669"/>
    <property type="project" value="InterPro"/>
</dbReference>
<dbReference type="GO" id="GO:0015979">
    <property type="term" value="P:photosynthesis"/>
    <property type="evidence" value="ECO:0007669"/>
    <property type="project" value="UniProtKB-UniRule"/>
</dbReference>
<dbReference type="GO" id="GO:0042549">
    <property type="term" value="P:photosystem II stabilization"/>
    <property type="evidence" value="ECO:0007669"/>
    <property type="project" value="InterPro"/>
</dbReference>
<dbReference type="FunFam" id="1.10.287.740:FF:000001">
    <property type="entry name" value="Photosystem II reaction center protein Z"/>
    <property type="match status" value="1"/>
</dbReference>
<dbReference type="Gene3D" id="1.10.287.740">
    <property type="entry name" value="Photosystem II PsbZ, reaction centre"/>
    <property type="match status" value="1"/>
</dbReference>
<dbReference type="HAMAP" id="MF_00644">
    <property type="entry name" value="PSII_PsbZ"/>
    <property type="match status" value="1"/>
</dbReference>
<dbReference type="InterPro" id="IPR002644">
    <property type="entry name" value="PSII_PsbZ"/>
</dbReference>
<dbReference type="InterPro" id="IPR036512">
    <property type="entry name" value="PSII_PsbZ_sf"/>
</dbReference>
<dbReference type="NCBIfam" id="TIGR03043">
    <property type="entry name" value="PS_II_psbZ"/>
    <property type="match status" value="1"/>
</dbReference>
<dbReference type="PANTHER" id="PTHR34971">
    <property type="entry name" value="PHOTOSYSTEM II REACTION CENTER PROTEIN Z"/>
    <property type="match status" value="1"/>
</dbReference>
<dbReference type="PANTHER" id="PTHR34971:SF2">
    <property type="entry name" value="PHOTOSYSTEM II REACTION CENTER PROTEIN Z"/>
    <property type="match status" value="1"/>
</dbReference>
<dbReference type="Pfam" id="PF01737">
    <property type="entry name" value="Ycf9"/>
    <property type="match status" value="1"/>
</dbReference>
<dbReference type="SUPFAM" id="SSF161055">
    <property type="entry name" value="PsbZ-like"/>
    <property type="match status" value="1"/>
</dbReference>
<geneLocation type="chloroplast"/>
<comment type="function">
    <text evidence="1">May control the interaction of photosystem II (PSII) cores with the light-harvesting antenna, regulates electron flow through the 2 photosystem reaction centers. PSII is a light-driven water plastoquinone oxidoreductase, using light energy to abstract electrons from H(2)O, generating a proton gradient subsequently used for ATP formation.</text>
</comment>
<comment type="subunit">
    <text evidence="1">PSII is composed of 1 copy each of membrane proteins PsbA, PsbB, PsbC, PsbD, PsbE, PsbF, PsbH, PsbI, PsbJ, PsbK, PsbL, PsbM, PsbT, PsbY, PsbZ, Psb30/Ycf12, at least 3 peripheral proteins of the oxygen-evolving complex and a large number of cofactors. It forms dimeric complexes.</text>
</comment>
<comment type="subcellular location">
    <subcellularLocation>
        <location evidence="1">Plastid</location>
        <location evidence="1">Chloroplast thylakoid membrane</location>
        <topology evidence="1">Multi-pass membrane protein</topology>
    </subcellularLocation>
</comment>
<comment type="similarity">
    <text evidence="1">Belongs to the PsbZ family.</text>
</comment>
<name>PSBZ_COFAR</name>
<accession>A0A332</accession>
<reference key="1">
    <citation type="journal article" date="2007" name="Plant Biotechnol. J.">
        <title>The complete nucleotide sequence of the coffee (Coffea arabica L.) chloroplast genome: organization and implications for biotechnology and phylogenetic relationships amongst angiosperms.</title>
        <authorList>
            <person name="Samson N."/>
            <person name="Bausher M.G."/>
            <person name="Lee S.-B."/>
            <person name="Jansen R.K."/>
            <person name="Daniell H."/>
        </authorList>
    </citation>
    <scope>NUCLEOTIDE SEQUENCE [LARGE SCALE GENOMIC DNA]</scope>
</reference>
<organism>
    <name type="scientific">Coffea arabica</name>
    <name type="common">Arabian coffee</name>
    <dbReference type="NCBI Taxonomy" id="13443"/>
    <lineage>
        <taxon>Eukaryota</taxon>
        <taxon>Viridiplantae</taxon>
        <taxon>Streptophyta</taxon>
        <taxon>Embryophyta</taxon>
        <taxon>Tracheophyta</taxon>
        <taxon>Spermatophyta</taxon>
        <taxon>Magnoliopsida</taxon>
        <taxon>eudicotyledons</taxon>
        <taxon>Gunneridae</taxon>
        <taxon>Pentapetalae</taxon>
        <taxon>asterids</taxon>
        <taxon>lamiids</taxon>
        <taxon>Gentianales</taxon>
        <taxon>Rubiaceae</taxon>
        <taxon>Ixoroideae</taxon>
        <taxon>Gardenieae complex</taxon>
        <taxon>Bertiereae - Coffeeae clade</taxon>
        <taxon>Coffeeae</taxon>
        <taxon>Coffea</taxon>
    </lineage>
</organism>
<keyword id="KW-0150">Chloroplast</keyword>
<keyword id="KW-0472">Membrane</keyword>
<keyword id="KW-0602">Photosynthesis</keyword>
<keyword id="KW-0604">Photosystem II</keyword>
<keyword id="KW-0934">Plastid</keyword>
<keyword id="KW-0674">Reaction center</keyword>
<keyword id="KW-1185">Reference proteome</keyword>
<keyword id="KW-0793">Thylakoid</keyword>
<keyword id="KW-0812">Transmembrane</keyword>
<keyword id="KW-1133">Transmembrane helix</keyword>
<protein>
    <recommendedName>
        <fullName evidence="1">Photosystem II reaction center protein Z</fullName>
        <shortName evidence="1">PSII-Z</shortName>
    </recommendedName>
</protein>
<feature type="chain" id="PRO_0000277212" description="Photosystem II reaction center protein Z">
    <location>
        <begin position="1"/>
        <end position="62"/>
    </location>
</feature>
<feature type="transmembrane region" description="Helical" evidence="1">
    <location>
        <begin position="8"/>
        <end position="28"/>
    </location>
</feature>
<feature type="transmembrane region" description="Helical" evidence="1">
    <location>
        <begin position="41"/>
        <end position="61"/>
    </location>
</feature>